<sequence length="113" mass="13303">MECFPSFSFSGFSCFSLFLDNGDEDRSDNWIFFNDIDFCKSGFEYELKHRKHNNEPCRRILVLKHRSGNVRINRIISLLDVQSLHVYINLFHSSFIDKITIHLTKLCIFPGLP</sequence>
<reference key="1">
    <citation type="journal article" date="1997" name="Nature">
        <title>The nucleotide sequence of Saccharomyces cerevisiae chromosome XII.</title>
        <authorList>
            <person name="Johnston M."/>
            <person name="Hillier L.W."/>
            <person name="Riles L."/>
            <person name="Albermann K."/>
            <person name="Andre B."/>
            <person name="Ansorge W."/>
            <person name="Benes V."/>
            <person name="Brueckner M."/>
            <person name="Delius H."/>
            <person name="Dubois E."/>
            <person name="Duesterhoeft A."/>
            <person name="Entian K.-D."/>
            <person name="Floeth M."/>
            <person name="Goffeau A."/>
            <person name="Hebling U."/>
            <person name="Heumann K."/>
            <person name="Heuss-Neitzel D."/>
            <person name="Hilbert H."/>
            <person name="Hilger F."/>
            <person name="Kleine K."/>
            <person name="Koetter P."/>
            <person name="Louis E.J."/>
            <person name="Messenguy F."/>
            <person name="Mewes H.-W."/>
            <person name="Miosga T."/>
            <person name="Moestl D."/>
            <person name="Mueller-Auer S."/>
            <person name="Nentwich U."/>
            <person name="Obermaier B."/>
            <person name="Piravandi E."/>
            <person name="Pohl T.M."/>
            <person name="Portetelle D."/>
            <person name="Purnelle B."/>
            <person name="Rechmann S."/>
            <person name="Rieger M."/>
            <person name="Rinke M."/>
            <person name="Rose M."/>
            <person name="Scharfe M."/>
            <person name="Scherens B."/>
            <person name="Scholler P."/>
            <person name="Schwager C."/>
            <person name="Schwarz S."/>
            <person name="Underwood A.P."/>
            <person name="Urrestarazu L.A."/>
            <person name="Vandenbol M."/>
            <person name="Verhasselt P."/>
            <person name="Vierendeels F."/>
            <person name="Voet M."/>
            <person name="Volckaert G."/>
            <person name="Voss H."/>
            <person name="Wambutt R."/>
            <person name="Wedler E."/>
            <person name="Wedler H."/>
            <person name="Zimmermann F.K."/>
            <person name="Zollner A."/>
            <person name="Hani J."/>
            <person name="Hoheisel J.D."/>
        </authorList>
    </citation>
    <scope>NUCLEOTIDE SEQUENCE [LARGE SCALE GENOMIC DNA]</scope>
    <source>
        <strain>ATCC 204508 / S288c</strain>
    </source>
</reference>
<reference key="2">
    <citation type="journal article" date="2014" name="G3 (Bethesda)">
        <title>The reference genome sequence of Saccharomyces cerevisiae: Then and now.</title>
        <authorList>
            <person name="Engel S.R."/>
            <person name="Dietrich F.S."/>
            <person name="Fisk D.G."/>
            <person name="Binkley G."/>
            <person name="Balakrishnan R."/>
            <person name="Costanzo M.C."/>
            <person name="Dwight S.S."/>
            <person name="Hitz B.C."/>
            <person name="Karra K."/>
            <person name="Nash R.S."/>
            <person name="Weng S."/>
            <person name="Wong E.D."/>
            <person name="Lloyd P."/>
            <person name="Skrzypek M.S."/>
            <person name="Miyasato S.R."/>
            <person name="Simison M."/>
            <person name="Cherry J.M."/>
        </authorList>
    </citation>
    <scope>GENOME REANNOTATION</scope>
    <source>
        <strain>ATCC 204508 / S288c</strain>
    </source>
</reference>
<name>YL282_YEAST</name>
<comment type="miscellaneous">
    <text evidence="1">Partially overlaps YLR283W.</text>
</comment>
<comment type="caution">
    <text evidence="2">Product of a dubious gene prediction unlikely to encode a functional protein. Because of that it is not part of the S.cerevisiae S288c complete/reference proteome set.</text>
</comment>
<gene>
    <name type="ordered locus">YLR282C</name>
    <name type="ORF">L8003.11A</name>
</gene>
<protein>
    <recommendedName>
        <fullName>Putative uncharacterized protein YLR282C</fullName>
    </recommendedName>
</protein>
<dbReference type="EMBL" id="U17243">
    <property type="protein sequence ID" value="AAB67351.1"/>
    <property type="molecule type" value="Genomic_DNA"/>
</dbReference>
<dbReference type="PIR" id="S69306">
    <property type="entry name" value="S69306"/>
</dbReference>
<dbReference type="STRING" id="4932.YLR282C"/>
<dbReference type="PaxDb" id="4932-YLR282C"/>
<dbReference type="EnsemblFungi" id="YLR282C_mRNA">
    <property type="protein sequence ID" value="YLR282C"/>
    <property type="gene ID" value="YLR282C"/>
</dbReference>
<dbReference type="AGR" id="SGD:S000004272"/>
<dbReference type="SGD" id="S000004272">
    <property type="gene designation" value="YLR282C"/>
</dbReference>
<dbReference type="HOGENOM" id="CLU_2135488_0_0_1"/>
<organism>
    <name type="scientific">Saccharomyces cerevisiae (strain ATCC 204508 / S288c)</name>
    <name type="common">Baker's yeast</name>
    <dbReference type="NCBI Taxonomy" id="559292"/>
    <lineage>
        <taxon>Eukaryota</taxon>
        <taxon>Fungi</taxon>
        <taxon>Dikarya</taxon>
        <taxon>Ascomycota</taxon>
        <taxon>Saccharomycotina</taxon>
        <taxon>Saccharomycetes</taxon>
        <taxon>Saccharomycetales</taxon>
        <taxon>Saccharomycetaceae</taxon>
        <taxon>Saccharomyces</taxon>
    </lineage>
</organism>
<feature type="chain" id="PRO_0000299630" description="Putative uncharacterized protein YLR282C">
    <location>
        <begin position="1"/>
        <end position="113"/>
    </location>
</feature>
<evidence type="ECO:0000305" key="1"/>
<evidence type="ECO:0000305" key="2">
    <source>
    </source>
</evidence>
<accession>O13542</accession>
<proteinExistence type="uncertain"/>